<protein>
    <recommendedName>
        <fullName>Metallothionein zym1</fullName>
    </recommendedName>
</protein>
<accession>Q9UTC0</accession>
<keyword id="KW-0963">Cytoplasm</keyword>
<keyword id="KW-0479">Metal-binding</keyword>
<keyword id="KW-0480">Metal-thiolate cluster</keyword>
<keyword id="KW-0539">Nucleus</keyword>
<keyword id="KW-1185">Reference proteome</keyword>
<keyword id="KW-0862">Zinc</keyword>
<dbReference type="EMBL" id="CU329670">
    <property type="protein sequence ID" value="CAB57404.1"/>
    <property type="molecule type" value="Genomic_DNA"/>
</dbReference>
<dbReference type="PIR" id="T38209">
    <property type="entry name" value="T38209"/>
</dbReference>
<dbReference type="RefSeq" id="NP_593743.1">
    <property type="nucleotide sequence ID" value="NM_001019174.2"/>
</dbReference>
<dbReference type="BioGRID" id="278237">
    <property type="interactions" value="5"/>
</dbReference>
<dbReference type="STRING" id="284812.Q9UTC0"/>
<dbReference type="PaxDb" id="4896-SPAC22H10.13.1"/>
<dbReference type="EnsemblFungi" id="SPAC22H10.13.1">
    <property type="protein sequence ID" value="SPAC22H10.13.1:pep"/>
    <property type="gene ID" value="SPAC22H10.13"/>
</dbReference>
<dbReference type="GeneID" id="2541743"/>
<dbReference type="KEGG" id="spo:2541743"/>
<dbReference type="PomBase" id="SPAC22H10.13">
    <property type="gene designation" value="zym1"/>
</dbReference>
<dbReference type="VEuPathDB" id="FungiDB:SPAC22H10.13"/>
<dbReference type="eggNOG" id="KOG4738">
    <property type="taxonomic scope" value="Eukaryota"/>
</dbReference>
<dbReference type="HOGENOM" id="CLU_204123_0_0_1"/>
<dbReference type="InParanoid" id="Q9UTC0"/>
<dbReference type="PRO" id="PR:Q9UTC0"/>
<dbReference type="Proteomes" id="UP000002485">
    <property type="component" value="Chromosome I"/>
</dbReference>
<dbReference type="GO" id="GO:0005829">
    <property type="term" value="C:cytosol"/>
    <property type="evidence" value="ECO:0007005"/>
    <property type="project" value="PomBase"/>
</dbReference>
<dbReference type="GO" id="GO:0005634">
    <property type="term" value="C:nucleus"/>
    <property type="evidence" value="ECO:0007005"/>
    <property type="project" value="PomBase"/>
</dbReference>
<dbReference type="GO" id="GO:0046872">
    <property type="term" value="F:metal ion binding"/>
    <property type="evidence" value="ECO:0007669"/>
    <property type="project" value="UniProtKB-KW"/>
</dbReference>
<dbReference type="GO" id="GO:0006882">
    <property type="term" value="P:intracellular zinc ion homeostasis"/>
    <property type="evidence" value="ECO:0000269"/>
    <property type="project" value="PomBase"/>
</dbReference>
<dbReference type="InterPro" id="IPR049529">
    <property type="entry name" value="Zym1-like"/>
</dbReference>
<dbReference type="Pfam" id="PF12749">
    <property type="entry name" value="Metallothio_Euk"/>
    <property type="match status" value="1"/>
</dbReference>
<name>ZYM1_SCHPO</name>
<reference key="1">
    <citation type="journal article" date="2002" name="Nature">
        <title>The genome sequence of Schizosaccharomyces pombe.</title>
        <authorList>
            <person name="Wood V."/>
            <person name="Gwilliam R."/>
            <person name="Rajandream M.A."/>
            <person name="Lyne M.H."/>
            <person name="Lyne R."/>
            <person name="Stewart A."/>
            <person name="Sgouros J.G."/>
            <person name="Peat N."/>
            <person name="Hayles J."/>
            <person name="Baker S.G."/>
            <person name="Basham D."/>
            <person name="Bowman S."/>
            <person name="Brooks K."/>
            <person name="Brown D."/>
            <person name="Brown S."/>
            <person name="Chillingworth T."/>
            <person name="Churcher C.M."/>
            <person name="Collins M."/>
            <person name="Connor R."/>
            <person name="Cronin A."/>
            <person name="Davis P."/>
            <person name="Feltwell T."/>
            <person name="Fraser A."/>
            <person name="Gentles S."/>
            <person name="Goble A."/>
            <person name="Hamlin N."/>
            <person name="Harris D.E."/>
            <person name="Hidalgo J."/>
            <person name="Hodgson G."/>
            <person name="Holroyd S."/>
            <person name="Hornsby T."/>
            <person name="Howarth S."/>
            <person name="Huckle E.J."/>
            <person name="Hunt S."/>
            <person name="Jagels K."/>
            <person name="James K.D."/>
            <person name="Jones L."/>
            <person name="Jones M."/>
            <person name="Leather S."/>
            <person name="McDonald S."/>
            <person name="McLean J."/>
            <person name="Mooney P."/>
            <person name="Moule S."/>
            <person name="Mungall K.L."/>
            <person name="Murphy L.D."/>
            <person name="Niblett D."/>
            <person name="Odell C."/>
            <person name="Oliver K."/>
            <person name="O'Neil S."/>
            <person name="Pearson D."/>
            <person name="Quail M.A."/>
            <person name="Rabbinowitsch E."/>
            <person name="Rutherford K.M."/>
            <person name="Rutter S."/>
            <person name="Saunders D."/>
            <person name="Seeger K."/>
            <person name="Sharp S."/>
            <person name="Skelton J."/>
            <person name="Simmonds M.N."/>
            <person name="Squares R."/>
            <person name="Squares S."/>
            <person name="Stevens K."/>
            <person name="Taylor K."/>
            <person name="Taylor R.G."/>
            <person name="Tivey A."/>
            <person name="Walsh S.V."/>
            <person name="Warren T."/>
            <person name="Whitehead S."/>
            <person name="Woodward J.R."/>
            <person name="Volckaert G."/>
            <person name="Aert R."/>
            <person name="Robben J."/>
            <person name="Grymonprez B."/>
            <person name="Weltjens I."/>
            <person name="Vanstreels E."/>
            <person name="Rieger M."/>
            <person name="Schaefer M."/>
            <person name="Mueller-Auer S."/>
            <person name="Gabel C."/>
            <person name="Fuchs M."/>
            <person name="Duesterhoeft A."/>
            <person name="Fritzc C."/>
            <person name="Holzer E."/>
            <person name="Moestl D."/>
            <person name="Hilbert H."/>
            <person name="Borzym K."/>
            <person name="Langer I."/>
            <person name="Beck A."/>
            <person name="Lehrach H."/>
            <person name="Reinhardt R."/>
            <person name="Pohl T.M."/>
            <person name="Eger P."/>
            <person name="Zimmermann W."/>
            <person name="Wedler H."/>
            <person name="Wambutt R."/>
            <person name="Purnelle B."/>
            <person name="Goffeau A."/>
            <person name="Cadieu E."/>
            <person name="Dreano S."/>
            <person name="Gloux S."/>
            <person name="Lelaure V."/>
            <person name="Mottier S."/>
            <person name="Galibert F."/>
            <person name="Aves S.J."/>
            <person name="Xiang Z."/>
            <person name="Hunt C."/>
            <person name="Moore K."/>
            <person name="Hurst S.M."/>
            <person name="Lucas M."/>
            <person name="Rochet M."/>
            <person name="Gaillardin C."/>
            <person name="Tallada V.A."/>
            <person name="Garzon A."/>
            <person name="Thode G."/>
            <person name="Daga R.R."/>
            <person name="Cruzado L."/>
            <person name="Jimenez J."/>
            <person name="Sanchez M."/>
            <person name="del Rey F."/>
            <person name="Benito J."/>
            <person name="Dominguez A."/>
            <person name="Revuelta J.L."/>
            <person name="Moreno S."/>
            <person name="Armstrong J."/>
            <person name="Forsburg S.L."/>
            <person name="Cerutti L."/>
            <person name="Lowe T."/>
            <person name="McCombie W.R."/>
            <person name="Paulsen I."/>
            <person name="Potashkin J."/>
            <person name="Shpakovski G.V."/>
            <person name="Ussery D."/>
            <person name="Barrell B.G."/>
            <person name="Nurse P."/>
        </authorList>
    </citation>
    <scope>NUCLEOTIDE SEQUENCE [LARGE SCALE GENOMIC DNA]</scope>
    <source>
        <strain>972 / ATCC 24843</strain>
    </source>
</reference>
<reference key="2">
    <citation type="journal article" date="2002" name="J. Biol. Chem.">
        <title>Surplus zinc is handled by Zym1 metallothionein and Zhf endoplasmic reticulum transporter in Schizosaccharomyces pombe.</title>
        <authorList>
            <person name="Borrelly G.P.M."/>
            <person name="Harrison M.D."/>
            <person name="Robinson A.K."/>
            <person name="Cox S.G."/>
            <person name="Robinson N.J."/>
            <person name="Whitehall S.K."/>
        </authorList>
    </citation>
    <scope>FUNCTION</scope>
    <scope>INDUCTION</scope>
    <scope>ZINC-BINDING</scope>
</reference>
<reference key="3">
    <citation type="journal article" date="2006" name="Nat. Biotechnol.">
        <title>ORFeome cloning and global analysis of protein localization in the fission yeast Schizosaccharomyces pombe.</title>
        <authorList>
            <person name="Matsuyama A."/>
            <person name="Arai R."/>
            <person name="Yashiroda Y."/>
            <person name="Shirai A."/>
            <person name="Kamata A."/>
            <person name="Sekido S."/>
            <person name="Kobayashi Y."/>
            <person name="Hashimoto A."/>
            <person name="Hamamoto M."/>
            <person name="Hiraoka Y."/>
            <person name="Horinouchi S."/>
            <person name="Yoshida M."/>
        </authorList>
    </citation>
    <scope>SUBCELLULAR LOCATION [LARGE SCALE ANALYSIS]</scope>
</reference>
<feature type="chain" id="PRO_0000374047" description="Metallothionein zym1">
    <location>
        <begin position="1"/>
        <end position="50"/>
    </location>
</feature>
<feature type="binding site" evidence="3">
    <location>
        <position position="7"/>
    </location>
    <ligand>
        <name>Zn(2+)</name>
        <dbReference type="ChEBI" id="CHEBI:29105"/>
        <label>1</label>
    </ligand>
</feature>
<feature type="binding site" evidence="3">
    <location>
        <position position="15"/>
    </location>
    <ligand>
        <name>Zn(2+)</name>
        <dbReference type="ChEBI" id="CHEBI:29105"/>
        <label>1</label>
    </ligand>
</feature>
<feature type="binding site" evidence="3">
    <location>
        <position position="15"/>
    </location>
    <ligand>
        <name>Zn(2+)</name>
        <dbReference type="ChEBI" id="CHEBI:29105"/>
        <label>2</label>
    </ligand>
</feature>
<feature type="binding site" evidence="3">
    <location>
        <position position="17"/>
    </location>
    <ligand>
        <name>Zn(2+)</name>
        <dbReference type="ChEBI" id="CHEBI:29105"/>
        <label>2</label>
    </ligand>
</feature>
<feature type="binding site" evidence="3">
    <location>
        <position position="21"/>
    </location>
    <ligand>
        <name>Zn(2+)</name>
        <dbReference type="ChEBI" id="CHEBI:29105"/>
        <label>2</label>
    </ligand>
</feature>
<feature type="binding site" evidence="3">
    <location>
        <position position="21"/>
    </location>
    <ligand>
        <name>Zn(2+)</name>
        <dbReference type="ChEBI" id="CHEBI:29105"/>
        <label>3</label>
    </ligand>
</feature>
<feature type="binding site" evidence="3">
    <location>
        <position position="23"/>
    </location>
    <ligand>
        <name>Zn(2+)</name>
        <dbReference type="ChEBI" id="CHEBI:29105"/>
        <label>3</label>
    </ligand>
</feature>
<feature type="binding site" evidence="3">
    <location>
        <position position="26"/>
    </location>
    <ligand>
        <name>Zn(2+)</name>
        <dbReference type="ChEBI" id="CHEBI:29105"/>
        <label>1</label>
    </ligand>
</feature>
<feature type="binding site" evidence="3">
    <location>
        <position position="30"/>
    </location>
    <ligand>
        <name>Zn(2+)</name>
        <dbReference type="ChEBI" id="CHEBI:29105"/>
        <label>1</label>
    </ligand>
</feature>
<feature type="binding site" evidence="3">
    <location>
        <position position="30"/>
    </location>
    <ligand>
        <name>Zn(2+)</name>
        <dbReference type="ChEBI" id="CHEBI:29105"/>
        <label>3</label>
    </ligand>
</feature>
<feature type="binding site" evidence="3">
    <location>
        <position position="32"/>
    </location>
    <ligand>
        <name>Zn(2+)</name>
        <dbReference type="ChEBI" id="CHEBI:29105"/>
        <label>2</label>
    </ligand>
</feature>
<feature type="binding site" evidence="3">
    <location>
        <position position="40"/>
    </location>
    <ligand>
        <name>Zn(2+)</name>
        <dbReference type="ChEBI" id="CHEBI:29105"/>
        <label>3</label>
    </ligand>
</feature>
<feature type="binding site" evidence="3">
    <location>
        <position position="40"/>
    </location>
    <ligand>
        <name>Zn(2+)</name>
        <dbReference type="ChEBI" id="CHEBI:29105"/>
        <label>4</label>
    </ligand>
</feature>
<feature type="binding site" evidence="3">
    <location>
        <position position="42"/>
    </location>
    <ligand>
        <name>Zn(2+)</name>
        <dbReference type="ChEBI" id="CHEBI:29105"/>
        <label>4</label>
    </ligand>
</feature>
<feature type="binding site" evidence="3">
    <location>
        <position position="45"/>
    </location>
    <ligand>
        <name>Zn(2+)</name>
        <dbReference type="ChEBI" id="CHEBI:29105"/>
        <label>4</label>
    </ligand>
</feature>
<feature type="binding site" evidence="3">
    <location>
        <position position="47"/>
    </location>
    <ligand>
        <name>Zn(2+)</name>
        <dbReference type="ChEBI" id="CHEBI:29105"/>
        <label>4</label>
    </ligand>
</feature>
<comment type="function">
    <text evidence="1">Metallothionein involved in tolerance to zinc and cadmium. Binds four zinc ions.</text>
</comment>
<comment type="subcellular location">
    <subcellularLocation>
        <location evidence="2">Cytoplasm</location>
    </subcellularLocation>
    <subcellularLocation>
        <location evidence="2">Nucleus</location>
    </subcellularLocation>
</comment>
<comment type="induction">
    <text evidence="1">Highly induced by zinc.</text>
</comment>
<comment type="similarity">
    <text evidence="3">Belongs to the metallothionein superfamily.</text>
</comment>
<gene>
    <name type="primary">zym1</name>
    <name type="ORF">SPAC22H10.13</name>
</gene>
<organism>
    <name type="scientific">Schizosaccharomyces pombe (strain 972 / ATCC 24843)</name>
    <name type="common">Fission yeast</name>
    <dbReference type="NCBI Taxonomy" id="284812"/>
    <lineage>
        <taxon>Eukaryota</taxon>
        <taxon>Fungi</taxon>
        <taxon>Dikarya</taxon>
        <taxon>Ascomycota</taxon>
        <taxon>Taphrinomycotina</taxon>
        <taxon>Schizosaccharomycetes</taxon>
        <taxon>Schizosaccharomycetales</taxon>
        <taxon>Schizosaccharomycetaceae</taxon>
        <taxon>Schizosaccharomyces</taxon>
    </lineage>
</organism>
<proteinExistence type="evidence at protein level"/>
<sequence length="50" mass="5316">MEHTTQCKSKQGKPCDCQSKCGCQDCKESCGCKSSAVDNCKCSSCKCASK</sequence>
<evidence type="ECO:0000269" key="1">
    <source>
    </source>
</evidence>
<evidence type="ECO:0000269" key="2">
    <source>
    </source>
</evidence>
<evidence type="ECO:0000305" key="3"/>